<organism>
    <name type="scientific">Saccharomyces pastorianus</name>
    <name type="common">Lager yeast</name>
    <name type="synonym">Saccharomyces cerevisiae x Saccharomyces eubayanus</name>
    <dbReference type="NCBI Taxonomy" id="27292"/>
    <lineage>
        <taxon>Eukaryota</taxon>
        <taxon>Fungi</taxon>
        <taxon>Dikarya</taxon>
        <taxon>Ascomycota</taxon>
        <taxon>Saccharomycotina</taxon>
        <taxon>Saccharomycetes</taxon>
        <taxon>Saccharomycetales</taxon>
        <taxon>Saccharomycetaceae</taxon>
        <taxon>Saccharomyces</taxon>
    </lineage>
</organism>
<comment type="catalytic activity">
    <reaction>
        <text>a primary alcohol + NAD(+) = an aldehyde + NADH + H(+)</text>
        <dbReference type="Rhea" id="RHEA:10736"/>
        <dbReference type="ChEBI" id="CHEBI:15378"/>
        <dbReference type="ChEBI" id="CHEBI:15734"/>
        <dbReference type="ChEBI" id="CHEBI:17478"/>
        <dbReference type="ChEBI" id="CHEBI:57540"/>
        <dbReference type="ChEBI" id="CHEBI:57945"/>
        <dbReference type="EC" id="1.1.1.1"/>
    </reaction>
</comment>
<comment type="catalytic activity">
    <reaction>
        <text>a secondary alcohol + NAD(+) = a ketone + NADH + H(+)</text>
        <dbReference type="Rhea" id="RHEA:10740"/>
        <dbReference type="ChEBI" id="CHEBI:15378"/>
        <dbReference type="ChEBI" id="CHEBI:17087"/>
        <dbReference type="ChEBI" id="CHEBI:35681"/>
        <dbReference type="ChEBI" id="CHEBI:57540"/>
        <dbReference type="ChEBI" id="CHEBI:57945"/>
        <dbReference type="EC" id="1.1.1.1"/>
    </reaction>
</comment>
<comment type="cofactor">
    <cofactor evidence="1">
        <name>Zn(2+)</name>
        <dbReference type="ChEBI" id="CHEBI:29105"/>
    </cofactor>
    <text evidence="1">Binds 2 Zn(2+) ions per subunit.</text>
</comment>
<comment type="similarity">
    <text evidence="2">Belongs to the zinc-containing alcohol dehydrogenase family.</text>
</comment>
<evidence type="ECO:0000250" key="1"/>
<evidence type="ECO:0000305" key="2"/>
<accession>Q6XQ67</accession>
<gene>
    <name type="primary">ADH5</name>
</gene>
<sequence length="351" mass="37648">MPSQVIPEKQKAIVFYETDGKLEYKDVTVPEPKPNEILVHVKYSGVCHSDLHAWHGDWPFQLKFPLIGGHEGAGVVVKLGSNVKGWKVGDFAGIKWLNGTCMSCEYCEVGNESQCPYLDGTGFTHDGTFQEYATADAVQAAHIPPNVNLAEVAPILCAGITVYKALKRANVIPGQWVTISGACGGLGSLAIQYALAMGYRVIGIDGGNAKRKLFEQLGGEIFIDFTEEKDIVGAIIKATNGGSHGVINVSVSEAAIEASTRYCRPNGTVVLVGMPAHAYCNSDVFNQVVKSISIVGSCVGNRADTREALDFFARGLIKSPIHLAGLSDVPEIFAKMEKGEIVGRYVVETSK</sequence>
<protein>
    <recommendedName>
        <fullName>Alcohol dehydrogenase 5</fullName>
        <ecNumber>1.1.1.1</ecNumber>
    </recommendedName>
    <alternativeName>
        <fullName>Alcohol dehydrogenase V</fullName>
    </alternativeName>
</protein>
<proteinExistence type="inferred from homology"/>
<feature type="chain" id="PRO_0000160732" description="Alcohol dehydrogenase 5">
    <location>
        <begin position="1"/>
        <end position="351"/>
    </location>
</feature>
<feature type="binding site" evidence="1">
    <location>
        <position position="47"/>
    </location>
    <ligand>
        <name>Zn(2+)</name>
        <dbReference type="ChEBI" id="CHEBI:29105"/>
        <label>1</label>
        <note>catalytic</note>
    </ligand>
</feature>
<feature type="binding site" evidence="1">
    <location>
        <position position="70"/>
    </location>
    <ligand>
        <name>Zn(2+)</name>
        <dbReference type="ChEBI" id="CHEBI:29105"/>
        <label>1</label>
        <note>catalytic</note>
    </ligand>
</feature>
<feature type="binding site" evidence="1">
    <location>
        <position position="101"/>
    </location>
    <ligand>
        <name>Zn(2+)</name>
        <dbReference type="ChEBI" id="CHEBI:29105"/>
        <label>2</label>
    </ligand>
</feature>
<feature type="binding site" evidence="1">
    <location>
        <position position="104"/>
    </location>
    <ligand>
        <name>Zn(2+)</name>
        <dbReference type="ChEBI" id="CHEBI:29105"/>
        <label>2</label>
    </ligand>
</feature>
<feature type="binding site" evidence="1">
    <location>
        <position position="107"/>
    </location>
    <ligand>
        <name>Zn(2+)</name>
        <dbReference type="ChEBI" id="CHEBI:29105"/>
        <label>2</label>
    </ligand>
</feature>
<feature type="binding site" evidence="1">
    <location>
        <position position="115"/>
    </location>
    <ligand>
        <name>Zn(2+)</name>
        <dbReference type="ChEBI" id="CHEBI:29105"/>
        <label>2</label>
    </ligand>
</feature>
<feature type="binding site" evidence="1">
    <location>
        <begin position="181"/>
        <end position="187"/>
    </location>
    <ligand>
        <name>NAD(+)</name>
        <dbReference type="ChEBI" id="CHEBI:57540"/>
    </ligand>
</feature>
<feature type="binding site" evidence="1">
    <location>
        <position position="183"/>
    </location>
    <ligand>
        <name>Zn(2+)</name>
        <dbReference type="ChEBI" id="CHEBI:29105"/>
        <label>1</label>
        <note>catalytic</note>
    </ligand>
</feature>
<feature type="binding site" evidence="1">
    <location>
        <position position="205"/>
    </location>
    <ligand>
        <name>NAD(+)</name>
        <dbReference type="ChEBI" id="CHEBI:57540"/>
    </ligand>
</feature>
<feature type="binding site" evidence="1">
    <location>
        <position position="210"/>
    </location>
    <ligand>
        <name>NAD(+)</name>
        <dbReference type="ChEBI" id="CHEBI:57540"/>
    </ligand>
</feature>
<feature type="binding site" evidence="1">
    <location>
        <begin position="272"/>
        <end position="274"/>
    </location>
    <ligand>
        <name>NAD(+)</name>
        <dbReference type="ChEBI" id="CHEBI:57540"/>
    </ligand>
</feature>
<feature type="binding site" evidence="1">
    <location>
        <position position="344"/>
    </location>
    <ligand>
        <name>NAD(+)</name>
        <dbReference type="ChEBI" id="CHEBI:57540"/>
    </ligand>
</feature>
<keyword id="KW-0479">Metal-binding</keyword>
<keyword id="KW-0520">NAD</keyword>
<keyword id="KW-0560">Oxidoreductase</keyword>
<keyword id="KW-0862">Zinc</keyword>
<name>ADH5_SACPS</name>
<dbReference type="EC" id="1.1.1.1"/>
<dbReference type="EMBL" id="AY217003">
    <property type="protein sequence ID" value="AAP51053.1"/>
    <property type="molecule type" value="Genomic_DNA"/>
</dbReference>
<dbReference type="SMR" id="Q6XQ67"/>
<dbReference type="OrthoDB" id="1879366at2759"/>
<dbReference type="GO" id="GO:0005737">
    <property type="term" value="C:cytoplasm"/>
    <property type="evidence" value="ECO:0007669"/>
    <property type="project" value="TreeGrafter"/>
</dbReference>
<dbReference type="GO" id="GO:0004022">
    <property type="term" value="F:alcohol dehydrogenase (NAD+) activity"/>
    <property type="evidence" value="ECO:0007669"/>
    <property type="project" value="UniProtKB-EC"/>
</dbReference>
<dbReference type="GO" id="GO:0008270">
    <property type="term" value="F:zinc ion binding"/>
    <property type="evidence" value="ECO:0007669"/>
    <property type="project" value="InterPro"/>
</dbReference>
<dbReference type="CDD" id="cd08297">
    <property type="entry name" value="CAD3"/>
    <property type="match status" value="1"/>
</dbReference>
<dbReference type="FunFam" id="3.40.50.720:FF:000039">
    <property type="entry name" value="Alcohol dehydrogenase AdhP"/>
    <property type="match status" value="1"/>
</dbReference>
<dbReference type="FunFam" id="3.90.180.10:FF:000002">
    <property type="entry name" value="Alcohol dehydrogenase AdhP"/>
    <property type="match status" value="1"/>
</dbReference>
<dbReference type="Gene3D" id="3.90.180.10">
    <property type="entry name" value="Medium-chain alcohol dehydrogenases, catalytic domain"/>
    <property type="match status" value="1"/>
</dbReference>
<dbReference type="Gene3D" id="3.40.50.720">
    <property type="entry name" value="NAD(P)-binding Rossmann-like Domain"/>
    <property type="match status" value="1"/>
</dbReference>
<dbReference type="InterPro" id="IPR013149">
    <property type="entry name" value="ADH-like_C"/>
</dbReference>
<dbReference type="InterPro" id="IPR013154">
    <property type="entry name" value="ADH-like_N"/>
</dbReference>
<dbReference type="InterPro" id="IPR002328">
    <property type="entry name" value="ADH_Zn_CS"/>
</dbReference>
<dbReference type="InterPro" id="IPR011032">
    <property type="entry name" value="GroES-like_sf"/>
</dbReference>
<dbReference type="InterPro" id="IPR036291">
    <property type="entry name" value="NAD(P)-bd_dom_sf"/>
</dbReference>
<dbReference type="InterPro" id="IPR020843">
    <property type="entry name" value="PKS_ER"/>
</dbReference>
<dbReference type="PANTHER" id="PTHR42940">
    <property type="entry name" value="ALCOHOL DEHYDROGENASE 1-RELATED"/>
    <property type="match status" value="1"/>
</dbReference>
<dbReference type="PANTHER" id="PTHR42940:SF3">
    <property type="entry name" value="ALCOHOL DEHYDROGENASE 1-RELATED"/>
    <property type="match status" value="1"/>
</dbReference>
<dbReference type="Pfam" id="PF08240">
    <property type="entry name" value="ADH_N"/>
    <property type="match status" value="1"/>
</dbReference>
<dbReference type="Pfam" id="PF00107">
    <property type="entry name" value="ADH_zinc_N"/>
    <property type="match status" value="1"/>
</dbReference>
<dbReference type="SMART" id="SM00829">
    <property type="entry name" value="PKS_ER"/>
    <property type="match status" value="1"/>
</dbReference>
<dbReference type="SUPFAM" id="SSF50129">
    <property type="entry name" value="GroES-like"/>
    <property type="match status" value="1"/>
</dbReference>
<dbReference type="SUPFAM" id="SSF51735">
    <property type="entry name" value="NAD(P)-binding Rossmann-fold domains"/>
    <property type="match status" value="1"/>
</dbReference>
<dbReference type="PROSITE" id="PS00059">
    <property type="entry name" value="ADH_ZINC"/>
    <property type="match status" value="1"/>
</dbReference>
<reference key="1">
    <citation type="journal article" date="2005" name="Nat. Genet.">
        <title>Resurrecting ancestral alcohol dehydrogenases from yeast.</title>
        <authorList>
            <person name="Thomson J.M."/>
            <person name="Gaucher E.A."/>
            <person name="Burgan M.F."/>
            <person name="De Kee D.W."/>
            <person name="Li T."/>
            <person name="Aris J.P."/>
            <person name="Benner S.A."/>
        </authorList>
    </citation>
    <scope>NUCLEOTIDE SEQUENCE [GENOMIC DNA]</scope>
</reference>